<dbReference type="EMBL" id="AE006467">
    <property type="protein sequence ID" value="AAK61280.1"/>
    <property type="status" value="ALT_SEQ"/>
    <property type="molecule type" value="Genomic_DNA"/>
</dbReference>
<dbReference type="EMBL" id="CH471112">
    <property type="protein sequence ID" value="EAW85657.1"/>
    <property type="status" value="ALT_SEQ"/>
    <property type="molecule type" value="Genomic_DNA"/>
</dbReference>
<dbReference type="EMBL" id="BC092497">
    <property type="protein sequence ID" value="AAH92497.1"/>
    <property type="molecule type" value="mRNA"/>
</dbReference>
<dbReference type="CCDS" id="CCDS61789.1"/>
<dbReference type="RefSeq" id="NP_001258980.1">
    <property type="nucleotide sequence ID" value="NM_001272051.2"/>
</dbReference>
<dbReference type="BioGRID" id="129712">
    <property type="interactions" value="7"/>
</dbReference>
<dbReference type="FunCoup" id="Q4G0I0">
    <property type="interactions" value="454"/>
</dbReference>
<dbReference type="IntAct" id="Q4G0I0">
    <property type="interactions" value="5"/>
</dbReference>
<dbReference type="STRING" id="9606.ENSP00000413100"/>
<dbReference type="GlyGen" id="Q4G0I0">
    <property type="glycosylation" value="1 site, 1 O-linked glycan (1 site)"/>
</dbReference>
<dbReference type="PhosphoSitePlus" id="Q4G0I0"/>
<dbReference type="BioMuta" id="C16orf91"/>
<dbReference type="jPOST" id="Q4G0I0"/>
<dbReference type="MassIVE" id="Q4G0I0"/>
<dbReference type="PaxDb" id="9606-ENSP00000413100"/>
<dbReference type="PeptideAtlas" id="Q4G0I0"/>
<dbReference type="ProteomicsDB" id="62105"/>
<dbReference type="Pumba" id="Q4G0I0"/>
<dbReference type="TopDownProteomics" id="Q4G0I0"/>
<dbReference type="Antibodypedia" id="62620">
    <property type="antibodies" value="5 antibodies from 4 providers"/>
</dbReference>
<dbReference type="DNASU" id="283951"/>
<dbReference type="Ensembl" id="ENST00000442039.3">
    <property type="protein sequence ID" value="ENSP00000413100.2"/>
    <property type="gene ID" value="ENSG00000174109.5"/>
</dbReference>
<dbReference type="GeneID" id="283951"/>
<dbReference type="KEGG" id="hsa:283951"/>
<dbReference type="MANE-Select" id="ENST00000442039.3">
    <property type="protein sequence ID" value="ENSP00000413100.2"/>
    <property type="RefSeq nucleotide sequence ID" value="NM_001272051.2"/>
    <property type="RefSeq protein sequence ID" value="NP_001258980.1"/>
</dbReference>
<dbReference type="UCSC" id="uc002clr.4">
    <property type="organism name" value="human"/>
</dbReference>
<dbReference type="AGR" id="HGNC:27558"/>
<dbReference type="CTD" id="283951"/>
<dbReference type="GeneCards" id="UQCC4"/>
<dbReference type="HGNC" id="HGNC:27558">
    <property type="gene designation" value="UQCC4"/>
</dbReference>
<dbReference type="HPA" id="ENSG00000174109">
    <property type="expression patterns" value="Low tissue specificity"/>
</dbReference>
<dbReference type="MIM" id="620578">
    <property type="type" value="gene"/>
</dbReference>
<dbReference type="neXtProt" id="NX_Q4G0I0"/>
<dbReference type="OpenTargets" id="ENSG00000174109"/>
<dbReference type="PharmGKB" id="PA164716853"/>
<dbReference type="VEuPathDB" id="HostDB:ENSG00000174109"/>
<dbReference type="eggNOG" id="ENOG502S8XX">
    <property type="taxonomic scope" value="Eukaryota"/>
</dbReference>
<dbReference type="GeneTree" id="ENSGT00510000049652"/>
<dbReference type="HOGENOM" id="CLU_142479_1_0_1"/>
<dbReference type="InParanoid" id="Q4G0I0"/>
<dbReference type="OMA" id="GHQRPWW"/>
<dbReference type="OrthoDB" id="2727at9604"/>
<dbReference type="PAN-GO" id="Q4G0I0">
    <property type="GO annotations" value="0 GO annotations based on evolutionary models"/>
</dbReference>
<dbReference type="PhylomeDB" id="Q4G0I0"/>
<dbReference type="TreeFam" id="TF343850"/>
<dbReference type="PathwayCommons" id="Q4G0I0"/>
<dbReference type="SignaLink" id="Q4G0I0"/>
<dbReference type="BioGRID-ORCS" id="283951">
    <property type="hits" value="9 hits in 1035 CRISPR screens"/>
</dbReference>
<dbReference type="GenomeRNAi" id="283951"/>
<dbReference type="Pharos" id="Q4G0I0">
    <property type="development level" value="Tdark"/>
</dbReference>
<dbReference type="PRO" id="PR:Q4G0I0"/>
<dbReference type="Proteomes" id="UP000005640">
    <property type="component" value="Chromosome 16"/>
</dbReference>
<dbReference type="RNAct" id="Q4G0I0">
    <property type="molecule type" value="protein"/>
</dbReference>
<dbReference type="Bgee" id="ENSG00000174109">
    <property type="expression patterns" value="Expressed in upper arm skin and 180 other cell types or tissues"/>
</dbReference>
<dbReference type="ExpressionAtlas" id="Q4G0I0">
    <property type="expression patterns" value="baseline and differential"/>
</dbReference>
<dbReference type="GO" id="GO:0005743">
    <property type="term" value="C:mitochondrial inner membrane"/>
    <property type="evidence" value="ECO:0000250"/>
    <property type="project" value="UniProtKB"/>
</dbReference>
<dbReference type="GO" id="GO:0005739">
    <property type="term" value="C:mitochondrion"/>
    <property type="evidence" value="ECO:0006056"/>
    <property type="project" value="FlyBase"/>
</dbReference>
<dbReference type="GO" id="GO:0034551">
    <property type="term" value="P:mitochondrial respiratory chain complex III assembly"/>
    <property type="evidence" value="ECO:0000250"/>
    <property type="project" value="UniProtKB"/>
</dbReference>
<dbReference type="InterPro" id="IPR029160">
    <property type="entry name" value="UQCC4"/>
</dbReference>
<dbReference type="InterPro" id="IPR023248">
    <property type="entry name" value="UQCC4_vert"/>
</dbReference>
<dbReference type="PANTHER" id="PTHR35268">
    <property type="entry name" value="PROTEIN CCSMST1"/>
    <property type="match status" value="1"/>
</dbReference>
<dbReference type="PANTHER" id="PTHR35268:SF1">
    <property type="entry name" value="UBIQUINOL-CYTOCHROME-C REDUCTASE COMPLEX ASSEMBLY FACTOR 4"/>
    <property type="match status" value="1"/>
</dbReference>
<dbReference type="Pfam" id="PF15013">
    <property type="entry name" value="CCSMST1"/>
    <property type="match status" value="1"/>
</dbReference>
<dbReference type="PRINTS" id="PR02042">
    <property type="entry name" value="CCSMST1"/>
</dbReference>
<keyword id="KW-0249">Electron transport</keyword>
<keyword id="KW-0472">Membrane</keyword>
<keyword id="KW-0496">Mitochondrion</keyword>
<keyword id="KW-0999">Mitochondrion inner membrane</keyword>
<keyword id="KW-1267">Proteomics identification</keyword>
<keyword id="KW-1185">Reference proteome</keyword>
<keyword id="KW-0679">Respiratory chain</keyword>
<keyword id="KW-0732">Signal</keyword>
<keyword id="KW-0812">Transmembrane</keyword>
<keyword id="KW-1133">Transmembrane helix</keyword>
<keyword id="KW-0813">Transport</keyword>
<feature type="signal peptide" evidence="2">
    <location>
        <begin position="1"/>
        <end position="15"/>
    </location>
</feature>
<feature type="chain" id="PRO_0000348602" description="Ubiquinol-cytochrome c reductase complex assembly factor 4">
    <location>
        <begin position="16"/>
        <end position="132"/>
    </location>
</feature>
<feature type="topological domain" description="Mitochondrial matrix" evidence="1">
    <location>
        <begin position="16"/>
        <end position="78"/>
    </location>
</feature>
<feature type="transmembrane region" description="Helical" evidence="2">
    <location>
        <begin position="79"/>
        <end position="95"/>
    </location>
</feature>
<feature type="topological domain" description="Mitochondrial intermembrane" evidence="1">
    <location>
        <begin position="96"/>
        <end position="132"/>
    </location>
</feature>
<feature type="region of interest" description="Disordered" evidence="3">
    <location>
        <begin position="29"/>
        <end position="72"/>
    </location>
</feature>
<feature type="region of interest" description="Disordered" evidence="3">
    <location>
        <begin position="110"/>
        <end position="132"/>
    </location>
</feature>
<name>UQCC4_HUMAN</name>
<gene>
    <name evidence="5" type="primary">UQCC4</name>
    <name type="synonym">C16orf91</name>
    <name type="synonym">CCSMST1</name>
</gene>
<reference key="1">
    <citation type="journal article" date="2001" name="Hum. Mol. Genet.">
        <title>Sequence, structure and pathology of the fully annotated terminal 2 Mb of the short arm of human chromosome 16.</title>
        <authorList>
            <person name="Daniels R.J."/>
            <person name="Peden J.F."/>
            <person name="Lloyd C."/>
            <person name="Horsley S.W."/>
            <person name="Clark K."/>
            <person name="Tufarelli C."/>
            <person name="Kearney L."/>
            <person name="Buckle V.J."/>
            <person name="Doggett N.A."/>
            <person name="Flint J."/>
            <person name="Higgs D.R."/>
        </authorList>
    </citation>
    <scope>NUCLEOTIDE SEQUENCE [LARGE SCALE GENOMIC DNA]</scope>
</reference>
<reference key="2">
    <citation type="submission" date="2005-09" db="EMBL/GenBank/DDBJ databases">
        <authorList>
            <person name="Mural R.J."/>
            <person name="Istrail S."/>
            <person name="Sutton G.G."/>
            <person name="Florea L."/>
            <person name="Halpern A.L."/>
            <person name="Mobarry C.M."/>
            <person name="Lippert R."/>
            <person name="Walenz B."/>
            <person name="Shatkay H."/>
            <person name="Dew I."/>
            <person name="Miller J.R."/>
            <person name="Flanigan M.J."/>
            <person name="Edwards N.J."/>
            <person name="Bolanos R."/>
            <person name="Fasulo D."/>
            <person name="Halldorsson B.V."/>
            <person name="Hannenhalli S."/>
            <person name="Turner R."/>
            <person name="Yooseph S."/>
            <person name="Lu F."/>
            <person name="Nusskern D.R."/>
            <person name="Shue B.C."/>
            <person name="Zheng X.H."/>
            <person name="Zhong F."/>
            <person name="Delcher A.L."/>
            <person name="Huson D.H."/>
            <person name="Kravitz S.A."/>
            <person name="Mouchard L."/>
            <person name="Reinert K."/>
            <person name="Remington K.A."/>
            <person name="Clark A.G."/>
            <person name="Waterman M.S."/>
            <person name="Eichler E.E."/>
            <person name="Adams M.D."/>
            <person name="Hunkapiller M.W."/>
            <person name="Myers E.W."/>
            <person name="Venter J.C."/>
        </authorList>
    </citation>
    <scope>NUCLEOTIDE SEQUENCE [LARGE SCALE GENOMIC DNA]</scope>
</reference>
<reference key="3">
    <citation type="journal article" date="2004" name="Genome Res.">
        <title>The status, quality, and expansion of the NIH full-length cDNA project: the Mammalian Gene Collection (MGC).</title>
        <authorList>
            <consortium name="The MGC Project Team"/>
        </authorList>
    </citation>
    <scope>NUCLEOTIDE SEQUENCE [LARGE SCALE MRNA]</scope>
    <source>
        <tissue>Placenta</tissue>
    </source>
</reference>
<accession>Q4G0I0</accession>
<accession>Q96RZ0</accession>
<protein>
    <recommendedName>
        <fullName>Ubiquinol-cytochrome c reductase complex assembly factor 4</fullName>
    </recommendedName>
    <alternativeName>
        <fullName>Protein CCSMST1</fullName>
    </alternativeName>
</protein>
<proteinExistence type="evidence at protein level"/>
<evidence type="ECO:0000250" key="1">
    <source>
        <dbReference type="UniProtKB" id="Q6RUT7"/>
    </source>
</evidence>
<evidence type="ECO:0000255" key="2"/>
<evidence type="ECO:0000256" key="3">
    <source>
        <dbReference type="SAM" id="MobiDB-lite"/>
    </source>
</evidence>
<evidence type="ECO:0000305" key="4"/>
<evidence type="ECO:0000312" key="5">
    <source>
        <dbReference type="HGNC" id="HGNC:27558"/>
    </source>
</evidence>
<organism>
    <name type="scientific">Homo sapiens</name>
    <name type="common">Human</name>
    <dbReference type="NCBI Taxonomy" id="9606"/>
    <lineage>
        <taxon>Eukaryota</taxon>
        <taxon>Metazoa</taxon>
        <taxon>Chordata</taxon>
        <taxon>Craniata</taxon>
        <taxon>Vertebrata</taxon>
        <taxon>Euteleostomi</taxon>
        <taxon>Mammalia</taxon>
        <taxon>Eutheria</taxon>
        <taxon>Euarchontoglires</taxon>
        <taxon>Primates</taxon>
        <taxon>Haplorrhini</taxon>
        <taxon>Catarrhini</taxon>
        <taxon>Hominidae</taxon>
        <taxon>Homo</taxon>
    </lineage>
</organism>
<sequence>MNRVLCAPAAGAVRALRLIGWASRSLHPLPGSRDRAHPAAEEEDDPDRPIEFSSSKANPHRWSVGHTMGKGHQRPWWKVLPLSCFLVALIIWCYLREESEADQWLRQVWGEVPEPSDRSEEPETPAAYRART</sequence>
<comment type="function">
    <text evidence="1">Required for the assembly and stability of the mitochondrial ubiquinol-cytochrome c reductase complex (complex III (CIII) or cytochrome b-c1 complex), a multisubunit transmembrane complex that is part of the mitochondrial electron transport chain (ETC) which drives oxidative phosphorylation.</text>
</comment>
<comment type="subunit">
    <text evidence="1">Forms a complex, named COMB/coordinator of mitochondrial CYTB biogenesis, composed of UQCC1, UQCC2, UQCC4, UQCC5 and UQCC6; stabilizes nascent cytochrome b/MT-CYB and promotes its membrane insertion. Forms a complex, named COMA, composed of UQCC1, UQCC2 and UQCC4; activates MT-CYB translation. Forms a complex, named COMC, composed of UQCC1, UQCC2; UQCC3 and UQCC4; mediates MT-CYB hemylation and association with the first nuclear-encoded complex III subunit UQCRQ. Complexes COMA and COMB are bound to the mitochondrion inner membrane by UQCC4.</text>
</comment>
<comment type="subcellular location">
    <subcellularLocation>
        <location evidence="1">Mitochondrion inner membrane</location>
        <topology evidence="4">Single-pass membrane protein</topology>
    </subcellularLocation>
</comment>
<comment type="similarity">
    <text evidence="4">Belongs to the UQCC4 family.</text>
</comment>
<comment type="sequence caution" evidence="4">
    <conflict type="erroneous gene model prediction">
        <sequence resource="EMBL-CDS" id="AAK61280"/>
    </conflict>
</comment>
<comment type="sequence caution" evidence="4">
    <conflict type="erroneous gene model prediction">
        <sequence resource="EMBL-CDS" id="EAW85657"/>
    </conflict>
</comment>